<feature type="chain" id="PRO_1000099649" description="Probable manganese-dependent inorganic pyrophosphatase">
    <location>
        <begin position="1"/>
        <end position="309"/>
    </location>
</feature>
<feature type="binding site" evidence="1">
    <location>
        <position position="9"/>
    </location>
    <ligand>
        <name>Mn(2+)</name>
        <dbReference type="ChEBI" id="CHEBI:29035"/>
        <label>1</label>
    </ligand>
</feature>
<feature type="binding site" evidence="1">
    <location>
        <position position="13"/>
    </location>
    <ligand>
        <name>Mn(2+)</name>
        <dbReference type="ChEBI" id="CHEBI:29035"/>
        <label>1</label>
    </ligand>
</feature>
<feature type="binding site" evidence="1">
    <location>
        <position position="15"/>
    </location>
    <ligand>
        <name>Mn(2+)</name>
        <dbReference type="ChEBI" id="CHEBI:29035"/>
        <label>2</label>
    </ligand>
</feature>
<feature type="binding site" evidence="1">
    <location>
        <position position="75"/>
    </location>
    <ligand>
        <name>Mn(2+)</name>
        <dbReference type="ChEBI" id="CHEBI:29035"/>
        <label>1</label>
    </ligand>
</feature>
<feature type="binding site" evidence="1">
    <location>
        <position position="75"/>
    </location>
    <ligand>
        <name>Mn(2+)</name>
        <dbReference type="ChEBI" id="CHEBI:29035"/>
        <label>2</label>
    </ligand>
</feature>
<feature type="binding site" evidence="1">
    <location>
        <position position="97"/>
    </location>
    <ligand>
        <name>Mn(2+)</name>
        <dbReference type="ChEBI" id="CHEBI:29035"/>
        <label>2</label>
    </ligand>
</feature>
<feature type="binding site" evidence="1">
    <location>
        <position position="149"/>
    </location>
    <ligand>
        <name>Mn(2+)</name>
        <dbReference type="ChEBI" id="CHEBI:29035"/>
        <label>2</label>
    </ligand>
</feature>
<gene>
    <name evidence="1" type="primary">ppaC</name>
    <name type="ordered locus">BcerKBAB4_2626</name>
</gene>
<evidence type="ECO:0000255" key="1">
    <source>
        <dbReference type="HAMAP-Rule" id="MF_00207"/>
    </source>
</evidence>
<protein>
    <recommendedName>
        <fullName evidence="1">Probable manganese-dependent inorganic pyrophosphatase</fullName>
        <ecNumber evidence="1">3.6.1.1</ecNumber>
    </recommendedName>
    <alternativeName>
        <fullName evidence="1">Pyrophosphate phospho-hydrolase</fullName>
        <shortName evidence="1">PPase</shortName>
    </alternativeName>
</protein>
<keyword id="KW-0963">Cytoplasm</keyword>
<keyword id="KW-0378">Hydrolase</keyword>
<keyword id="KW-0464">Manganese</keyword>
<keyword id="KW-0479">Metal-binding</keyword>
<name>PPAC_BACMK</name>
<dbReference type="EC" id="3.6.1.1" evidence="1"/>
<dbReference type="EMBL" id="CP000903">
    <property type="protein sequence ID" value="ABY43828.1"/>
    <property type="molecule type" value="Genomic_DNA"/>
</dbReference>
<dbReference type="RefSeq" id="WP_002032629.1">
    <property type="nucleotide sequence ID" value="NC_010184.1"/>
</dbReference>
<dbReference type="SMR" id="A9VIG8"/>
<dbReference type="KEGG" id="bwe:BcerKBAB4_2626"/>
<dbReference type="eggNOG" id="COG1227">
    <property type="taxonomic scope" value="Bacteria"/>
</dbReference>
<dbReference type="HOGENOM" id="CLU_025243_0_1_9"/>
<dbReference type="Proteomes" id="UP000002154">
    <property type="component" value="Chromosome"/>
</dbReference>
<dbReference type="GO" id="GO:0005737">
    <property type="term" value="C:cytoplasm"/>
    <property type="evidence" value="ECO:0007669"/>
    <property type="project" value="UniProtKB-SubCell"/>
</dbReference>
<dbReference type="GO" id="GO:0004427">
    <property type="term" value="F:inorganic diphosphate phosphatase activity"/>
    <property type="evidence" value="ECO:0007669"/>
    <property type="project" value="UniProtKB-UniRule"/>
</dbReference>
<dbReference type="GO" id="GO:0030145">
    <property type="term" value="F:manganese ion binding"/>
    <property type="evidence" value="ECO:0007669"/>
    <property type="project" value="UniProtKB-UniRule"/>
</dbReference>
<dbReference type="FunFam" id="3.10.310.20:FF:000001">
    <property type="entry name" value="Probable manganese-dependent inorganic pyrophosphatase"/>
    <property type="match status" value="1"/>
</dbReference>
<dbReference type="FunFam" id="3.90.1640.10:FF:000001">
    <property type="entry name" value="Probable manganese-dependent inorganic pyrophosphatase"/>
    <property type="match status" value="1"/>
</dbReference>
<dbReference type="Gene3D" id="3.10.310.20">
    <property type="entry name" value="DHHA2 domain"/>
    <property type="match status" value="1"/>
</dbReference>
<dbReference type="Gene3D" id="3.90.1640.10">
    <property type="entry name" value="inorganic pyrophosphatase (n-terminal core)"/>
    <property type="match status" value="1"/>
</dbReference>
<dbReference type="HAMAP" id="MF_00207">
    <property type="entry name" value="PPase_C"/>
    <property type="match status" value="1"/>
</dbReference>
<dbReference type="InterPro" id="IPR001667">
    <property type="entry name" value="DDH_dom"/>
</dbReference>
<dbReference type="InterPro" id="IPR038763">
    <property type="entry name" value="DHH_sf"/>
</dbReference>
<dbReference type="InterPro" id="IPR004097">
    <property type="entry name" value="DHHA2"/>
</dbReference>
<dbReference type="InterPro" id="IPR038222">
    <property type="entry name" value="DHHA2_dom_sf"/>
</dbReference>
<dbReference type="InterPro" id="IPR022934">
    <property type="entry name" value="Mn-dep_inorganic_PyrPase"/>
</dbReference>
<dbReference type="NCBIfam" id="NF003877">
    <property type="entry name" value="PRK05427.1"/>
    <property type="match status" value="1"/>
</dbReference>
<dbReference type="PANTHER" id="PTHR12112">
    <property type="entry name" value="BNIP - RELATED"/>
    <property type="match status" value="1"/>
</dbReference>
<dbReference type="PANTHER" id="PTHR12112:SF22">
    <property type="entry name" value="MANGANESE-DEPENDENT INORGANIC PYROPHOSPHATASE-RELATED"/>
    <property type="match status" value="1"/>
</dbReference>
<dbReference type="Pfam" id="PF01368">
    <property type="entry name" value="DHH"/>
    <property type="match status" value="1"/>
</dbReference>
<dbReference type="Pfam" id="PF02833">
    <property type="entry name" value="DHHA2"/>
    <property type="match status" value="1"/>
</dbReference>
<dbReference type="SMART" id="SM01131">
    <property type="entry name" value="DHHA2"/>
    <property type="match status" value="1"/>
</dbReference>
<dbReference type="SUPFAM" id="SSF64182">
    <property type="entry name" value="DHH phosphoesterases"/>
    <property type="match status" value="1"/>
</dbReference>
<accession>A9VIG8</accession>
<proteinExistence type="inferred from homology"/>
<comment type="catalytic activity">
    <reaction evidence="1">
        <text>diphosphate + H2O = 2 phosphate + H(+)</text>
        <dbReference type="Rhea" id="RHEA:24576"/>
        <dbReference type="ChEBI" id="CHEBI:15377"/>
        <dbReference type="ChEBI" id="CHEBI:15378"/>
        <dbReference type="ChEBI" id="CHEBI:33019"/>
        <dbReference type="ChEBI" id="CHEBI:43474"/>
        <dbReference type="EC" id="3.6.1.1"/>
    </reaction>
</comment>
<comment type="cofactor">
    <cofactor evidence="1">
        <name>Mn(2+)</name>
        <dbReference type="ChEBI" id="CHEBI:29035"/>
    </cofactor>
    <text evidence="1">Binds 2 manganese ions per subunit.</text>
</comment>
<comment type="subcellular location">
    <subcellularLocation>
        <location evidence="1">Cytoplasm</location>
    </subcellularLocation>
</comment>
<comment type="similarity">
    <text evidence="1">Belongs to the PPase class C family.</text>
</comment>
<sequence length="309" mass="33734">MEKVLVFGHKNPDTDAICSAIAYAELKKELGMNAEPVRLGEISGETQFALDSFKVEGPRFVETVANEVDNVILVDHNERQQSANDIESVRVLEVIDHHRIANFETSDPIYYRCEPVGCTATILNKMYKENGVTIRKEVAGLMLSAIISDSLLFKSPTCTEQDVAAARELAEIAGVDADSYGLEMLKAGADLSGKTMEQLISLDAKEFQMGNAKVEIAQVNAVDTNDVLVHQAELEKVITTVVEEKGLDLFLFVVTDILTNDSVGLAIGKATNVVEKAYNVTLQNNTATLKGVVSRKKQIVPVLTETFQA</sequence>
<organism>
    <name type="scientific">Bacillus mycoides (strain KBAB4)</name>
    <name type="common">Bacillus weihenstephanensis</name>
    <dbReference type="NCBI Taxonomy" id="315730"/>
    <lineage>
        <taxon>Bacteria</taxon>
        <taxon>Bacillati</taxon>
        <taxon>Bacillota</taxon>
        <taxon>Bacilli</taxon>
        <taxon>Bacillales</taxon>
        <taxon>Bacillaceae</taxon>
        <taxon>Bacillus</taxon>
        <taxon>Bacillus cereus group</taxon>
    </lineage>
</organism>
<reference key="1">
    <citation type="journal article" date="2008" name="Chem. Biol. Interact.">
        <title>Extending the Bacillus cereus group genomics to putative food-borne pathogens of different toxicity.</title>
        <authorList>
            <person name="Lapidus A."/>
            <person name="Goltsman E."/>
            <person name="Auger S."/>
            <person name="Galleron N."/>
            <person name="Segurens B."/>
            <person name="Dossat C."/>
            <person name="Land M.L."/>
            <person name="Broussolle V."/>
            <person name="Brillard J."/>
            <person name="Guinebretiere M.-H."/>
            <person name="Sanchis V."/>
            <person name="Nguen-the C."/>
            <person name="Lereclus D."/>
            <person name="Richardson P."/>
            <person name="Wincker P."/>
            <person name="Weissenbach J."/>
            <person name="Ehrlich S.D."/>
            <person name="Sorokin A."/>
        </authorList>
    </citation>
    <scope>NUCLEOTIDE SEQUENCE [LARGE SCALE GENOMIC DNA]</scope>
    <source>
        <strain>KBAB4</strain>
    </source>
</reference>